<feature type="chain" id="PRO_1000143323" description="Small ribosomal subunit protein uS17">
    <location>
        <begin position="1"/>
        <end position="89"/>
    </location>
</feature>
<protein>
    <recommendedName>
        <fullName evidence="1">Small ribosomal subunit protein uS17</fullName>
    </recommendedName>
    <alternativeName>
        <fullName evidence="2">30S ribosomal protein S17</fullName>
    </alternativeName>
</protein>
<comment type="function">
    <text evidence="1">One of the primary rRNA binding proteins, it binds specifically to the 5'-end of 16S ribosomal RNA.</text>
</comment>
<comment type="subunit">
    <text evidence="1">Part of the 30S ribosomal subunit.</text>
</comment>
<comment type="similarity">
    <text evidence="1">Belongs to the universal ribosomal protein uS17 family.</text>
</comment>
<dbReference type="EMBL" id="CP000967">
    <property type="protein sequence ID" value="ACD57896.1"/>
    <property type="molecule type" value="Genomic_DNA"/>
</dbReference>
<dbReference type="RefSeq" id="WP_003486701.1">
    <property type="nucleotide sequence ID" value="NC_010717.2"/>
</dbReference>
<dbReference type="SMR" id="B2SQR9"/>
<dbReference type="GeneID" id="97509345"/>
<dbReference type="KEGG" id="xop:PXO_04512"/>
<dbReference type="eggNOG" id="COG0186">
    <property type="taxonomic scope" value="Bacteria"/>
</dbReference>
<dbReference type="HOGENOM" id="CLU_073626_1_1_6"/>
<dbReference type="Proteomes" id="UP000001740">
    <property type="component" value="Chromosome"/>
</dbReference>
<dbReference type="GO" id="GO:0022627">
    <property type="term" value="C:cytosolic small ribosomal subunit"/>
    <property type="evidence" value="ECO:0007669"/>
    <property type="project" value="TreeGrafter"/>
</dbReference>
<dbReference type="GO" id="GO:0019843">
    <property type="term" value="F:rRNA binding"/>
    <property type="evidence" value="ECO:0007669"/>
    <property type="project" value="UniProtKB-UniRule"/>
</dbReference>
<dbReference type="GO" id="GO:0003735">
    <property type="term" value="F:structural constituent of ribosome"/>
    <property type="evidence" value="ECO:0007669"/>
    <property type="project" value="InterPro"/>
</dbReference>
<dbReference type="GO" id="GO:0006412">
    <property type="term" value="P:translation"/>
    <property type="evidence" value="ECO:0007669"/>
    <property type="project" value="UniProtKB-UniRule"/>
</dbReference>
<dbReference type="CDD" id="cd00364">
    <property type="entry name" value="Ribosomal_uS17"/>
    <property type="match status" value="1"/>
</dbReference>
<dbReference type="FunFam" id="2.40.50.140:FF:000204">
    <property type="entry name" value="30S ribosomal protein S17"/>
    <property type="match status" value="1"/>
</dbReference>
<dbReference type="Gene3D" id="2.40.50.140">
    <property type="entry name" value="Nucleic acid-binding proteins"/>
    <property type="match status" value="1"/>
</dbReference>
<dbReference type="HAMAP" id="MF_01345_B">
    <property type="entry name" value="Ribosomal_uS17_B"/>
    <property type="match status" value="1"/>
</dbReference>
<dbReference type="InterPro" id="IPR012340">
    <property type="entry name" value="NA-bd_OB-fold"/>
</dbReference>
<dbReference type="InterPro" id="IPR000266">
    <property type="entry name" value="Ribosomal_uS17"/>
</dbReference>
<dbReference type="InterPro" id="IPR019984">
    <property type="entry name" value="Ribosomal_uS17_bact/chlr"/>
</dbReference>
<dbReference type="NCBIfam" id="NF004123">
    <property type="entry name" value="PRK05610.1"/>
    <property type="match status" value="1"/>
</dbReference>
<dbReference type="NCBIfam" id="TIGR03635">
    <property type="entry name" value="uS17_bact"/>
    <property type="match status" value="1"/>
</dbReference>
<dbReference type="PANTHER" id="PTHR10744">
    <property type="entry name" value="40S RIBOSOMAL PROTEIN S11 FAMILY MEMBER"/>
    <property type="match status" value="1"/>
</dbReference>
<dbReference type="PANTHER" id="PTHR10744:SF1">
    <property type="entry name" value="SMALL RIBOSOMAL SUBUNIT PROTEIN US17M"/>
    <property type="match status" value="1"/>
</dbReference>
<dbReference type="Pfam" id="PF00366">
    <property type="entry name" value="Ribosomal_S17"/>
    <property type="match status" value="1"/>
</dbReference>
<dbReference type="PRINTS" id="PR00973">
    <property type="entry name" value="RIBOSOMALS17"/>
</dbReference>
<dbReference type="SUPFAM" id="SSF50249">
    <property type="entry name" value="Nucleic acid-binding proteins"/>
    <property type="match status" value="1"/>
</dbReference>
<reference key="1">
    <citation type="journal article" date="2008" name="BMC Genomics">
        <title>Genome sequence and rapid evolution of the rice pathogen Xanthomonas oryzae pv. oryzae PXO99A.</title>
        <authorList>
            <person name="Salzberg S.L."/>
            <person name="Sommer D.D."/>
            <person name="Schatz M.C."/>
            <person name="Phillippy A.M."/>
            <person name="Rabinowicz P.D."/>
            <person name="Tsuge S."/>
            <person name="Furutani A."/>
            <person name="Ochiai H."/>
            <person name="Delcher A.L."/>
            <person name="Kelley D."/>
            <person name="Madupu R."/>
            <person name="Puiu D."/>
            <person name="Radune D."/>
            <person name="Shumway M."/>
            <person name="Trapnell C."/>
            <person name="Aparna G."/>
            <person name="Jha G."/>
            <person name="Pandey A."/>
            <person name="Patil P.B."/>
            <person name="Ishihara H."/>
            <person name="Meyer D.F."/>
            <person name="Szurek B."/>
            <person name="Verdier V."/>
            <person name="Koebnik R."/>
            <person name="Dow J.M."/>
            <person name="Ryan R.P."/>
            <person name="Hirata H."/>
            <person name="Tsuyumu S."/>
            <person name="Won Lee S."/>
            <person name="Seo Y.-S."/>
            <person name="Sriariyanum M."/>
            <person name="Ronald P.C."/>
            <person name="Sonti R.V."/>
            <person name="Van Sluys M.-A."/>
            <person name="Leach J.E."/>
            <person name="White F.F."/>
            <person name="Bogdanove A.J."/>
        </authorList>
    </citation>
    <scope>NUCLEOTIDE SEQUENCE [LARGE SCALE GENOMIC DNA]</scope>
    <source>
        <strain>PXO99A</strain>
    </source>
</reference>
<gene>
    <name evidence="1" type="primary">rpsQ</name>
    <name type="ordered locus">PXO_04512</name>
</gene>
<accession>B2SQR9</accession>
<name>RS17_XANOP</name>
<evidence type="ECO:0000255" key="1">
    <source>
        <dbReference type="HAMAP-Rule" id="MF_01345"/>
    </source>
</evidence>
<evidence type="ECO:0000305" key="2"/>
<proteinExistence type="inferred from homology"/>
<sequence>MSDNNEKQTLRTVEGRVVSNKMDKTVTVLVERQVKHALYGKYIKRSTKLHAHDADNACNEGDVVRVTEIAPMSKTKNWRVVEIVTRSAE</sequence>
<organism>
    <name type="scientific">Xanthomonas oryzae pv. oryzae (strain PXO99A)</name>
    <dbReference type="NCBI Taxonomy" id="360094"/>
    <lineage>
        <taxon>Bacteria</taxon>
        <taxon>Pseudomonadati</taxon>
        <taxon>Pseudomonadota</taxon>
        <taxon>Gammaproteobacteria</taxon>
        <taxon>Lysobacterales</taxon>
        <taxon>Lysobacteraceae</taxon>
        <taxon>Xanthomonas</taxon>
    </lineage>
</organism>
<keyword id="KW-0687">Ribonucleoprotein</keyword>
<keyword id="KW-0689">Ribosomal protein</keyword>
<keyword id="KW-0694">RNA-binding</keyword>
<keyword id="KW-0699">rRNA-binding</keyword>